<name>NU2C1_WHEAT</name>
<reference key="1">
    <citation type="journal article" date="2000" name="Plant Mol. Biol. Rep.">
        <title>Chinese spring wheat (Triticum aestivum L.) chloroplast genome: complete sequence and contig clones.</title>
        <authorList>
            <person name="Ogihara Y."/>
            <person name="Isono K."/>
            <person name="Kojima T."/>
            <person name="Endo A."/>
            <person name="Hanaoka M."/>
            <person name="Shiina T."/>
            <person name="Terachi T."/>
            <person name="Utsugi S."/>
            <person name="Murata M."/>
            <person name="Mori N."/>
            <person name="Takumi S."/>
            <person name="Ikeo K."/>
            <person name="Gojobori T."/>
            <person name="Murai R."/>
            <person name="Murai K."/>
            <person name="Matsuoka Y."/>
            <person name="Ohnishi Y."/>
            <person name="Tajiri H."/>
            <person name="Tsunewaki K."/>
        </authorList>
    </citation>
    <scope>NUCLEOTIDE SEQUENCE [LARGE SCALE GENOMIC DNA]</scope>
    <source>
        <strain>cv. Chinese Spring</strain>
    </source>
</reference>
<feature type="chain" id="PRO_0000117681" description="NAD(P)H-quinone oxidoreductase subunit 2 A, chloroplastic">
    <location>
        <begin position="1"/>
        <end position="510"/>
    </location>
</feature>
<feature type="transmembrane region" description="Helical" evidence="1">
    <location>
        <begin position="24"/>
        <end position="44"/>
    </location>
</feature>
<feature type="transmembrane region" description="Helical" evidence="1">
    <location>
        <begin position="59"/>
        <end position="79"/>
    </location>
</feature>
<feature type="transmembrane region" description="Helical" evidence="1">
    <location>
        <begin position="99"/>
        <end position="119"/>
    </location>
</feature>
<feature type="transmembrane region" description="Helical" evidence="1">
    <location>
        <begin position="124"/>
        <end position="144"/>
    </location>
</feature>
<feature type="transmembrane region" description="Helical" evidence="1">
    <location>
        <begin position="149"/>
        <end position="169"/>
    </location>
</feature>
<feature type="transmembrane region" description="Helical" evidence="1">
    <location>
        <begin position="183"/>
        <end position="203"/>
    </location>
</feature>
<feature type="transmembrane region" description="Helical" evidence="1">
    <location>
        <begin position="229"/>
        <end position="249"/>
    </location>
</feature>
<feature type="transmembrane region" description="Helical" evidence="1">
    <location>
        <begin position="295"/>
        <end position="315"/>
    </location>
</feature>
<feature type="transmembrane region" description="Helical" evidence="1">
    <location>
        <begin position="323"/>
        <end position="343"/>
    </location>
</feature>
<feature type="transmembrane region" description="Helical" evidence="1">
    <location>
        <begin position="354"/>
        <end position="374"/>
    </location>
</feature>
<feature type="transmembrane region" description="Helical" evidence="1">
    <location>
        <begin position="395"/>
        <end position="415"/>
    </location>
</feature>
<feature type="transmembrane region" description="Helical" evidence="1">
    <location>
        <begin position="418"/>
        <end position="438"/>
    </location>
</feature>
<protein>
    <recommendedName>
        <fullName evidence="1">NAD(P)H-quinone oxidoreductase subunit 2 A, chloroplastic</fullName>
        <ecNumber evidence="1">7.1.1.-</ecNumber>
    </recommendedName>
    <alternativeName>
        <fullName evidence="1">NAD(P)H dehydrogenase, subunit 2 A</fullName>
    </alternativeName>
    <alternativeName>
        <fullName evidence="1">NADH-plastoquinone oxidoreductase subunit 2 A</fullName>
    </alternativeName>
</protein>
<proteinExistence type="inferred from homology"/>
<gene>
    <name evidence="1" type="primary">ndhB1</name>
</gene>
<sequence>MIWHVQNENFILDSTSIFMKAFHLLLFNGSFIFPECILIFGLILLLMFDSTSVQKDRPWFYFISSTCLVISITALLFRWREEPIISFSGNFQTNNFNEIFQFLILLCSTLCIPLSVEYIECTEMAITEFLLFVLTATLGGMFLCGANDLITIFVAPECFSLCSYLLSGYTERDLRSNGASLQYLLMGGAGSSILVHGFSWLYGSSGGEIELQEIVNGLINTQMYNSPGISLALISITVGLGFKLSPAPFHQWTPDVYEGSLLHFVAFHSITSKVAASASATRILEFSLYFSSNEWHLLLEILAILSMILGNLLAITQTSMKRMLAYSSIGQIGYVIIGIIVGDSNDGYASMITYMLFYISMNLGTFACIVLFGLRTGTDNIRDYAGLYTKDPFLALSLALCLLSLGGLPPLAGFFGKLYLFWCGWQAGLYFLVSIGLLTSVLSIYYYLKIIKLLMTGRNQEITPYVRNYRRSPLRSNNSIELSMTVCVIASTIPGISMNPILAIAQDTLF</sequence>
<comment type="function">
    <text evidence="1">NDH shuttles electrons from NAD(P)H:plastoquinone, via FMN and iron-sulfur (Fe-S) centers, to quinones in the photosynthetic chain and possibly in a chloroplast respiratory chain. The immediate electron acceptor for the enzyme in this species is believed to be plastoquinone. Couples the redox reaction to proton translocation, and thus conserves the redox energy in a proton gradient.</text>
</comment>
<comment type="catalytic activity">
    <reaction evidence="1">
        <text>a plastoquinone + NADH + (n+1) H(+)(in) = a plastoquinol + NAD(+) + n H(+)(out)</text>
        <dbReference type="Rhea" id="RHEA:42608"/>
        <dbReference type="Rhea" id="RHEA-COMP:9561"/>
        <dbReference type="Rhea" id="RHEA-COMP:9562"/>
        <dbReference type="ChEBI" id="CHEBI:15378"/>
        <dbReference type="ChEBI" id="CHEBI:17757"/>
        <dbReference type="ChEBI" id="CHEBI:57540"/>
        <dbReference type="ChEBI" id="CHEBI:57945"/>
        <dbReference type="ChEBI" id="CHEBI:62192"/>
    </reaction>
</comment>
<comment type="catalytic activity">
    <reaction evidence="1">
        <text>a plastoquinone + NADPH + (n+1) H(+)(in) = a plastoquinol + NADP(+) + n H(+)(out)</text>
        <dbReference type="Rhea" id="RHEA:42612"/>
        <dbReference type="Rhea" id="RHEA-COMP:9561"/>
        <dbReference type="Rhea" id="RHEA-COMP:9562"/>
        <dbReference type="ChEBI" id="CHEBI:15378"/>
        <dbReference type="ChEBI" id="CHEBI:17757"/>
        <dbReference type="ChEBI" id="CHEBI:57783"/>
        <dbReference type="ChEBI" id="CHEBI:58349"/>
        <dbReference type="ChEBI" id="CHEBI:62192"/>
    </reaction>
</comment>
<comment type="subunit">
    <text evidence="1">NDH is composed of at least 16 different subunits, 5 of which are encoded in the nucleus.</text>
</comment>
<comment type="subcellular location">
    <subcellularLocation>
        <location evidence="1">Plastid</location>
        <location evidence="1">Chloroplast thylakoid membrane</location>
        <topology evidence="1">Multi-pass membrane protein</topology>
    </subcellularLocation>
</comment>
<comment type="similarity">
    <text evidence="1">Belongs to the complex I subunit 2 family.</text>
</comment>
<evidence type="ECO:0000255" key="1">
    <source>
        <dbReference type="HAMAP-Rule" id="MF_00445"/>
    </source>
</evidence>
<dbReference type="EC" id="7.1.1.-" evidence="1"/>
<dbReference type="EMBL" id="AB042240">
    <property type="protein sequence ID" value="BAB47077.1"/>
    <property type="molecule type" value="Genomic_DNA"/>
</dbReference>
<dbReference type="SMR" id="P0CD54"/>
<dbReference type="STRING" id="4565.P0CD54"/>
<dbReference type="PaxDb" id="4565-EPlTAEP00000010012"/>
<dbReference type="KEGG" id="taes:803158"/>
<dbReference type="KEGG" id="taes:803213"/>
<dbReference type="eggNOG" id="KOG4668">
    <property type="taxonomic scope" value="Eukaryota"/>
</dbReference>
<dbReference type="Proteomes" id="UP000019116">
    <property type="component" value="Chloroplast"/>
</dbReference>
<dbReference type="GO" id="GO:0009535">
    <property type="term" value="C:chloroplast thylakoid membrane"/>
    <property type="evidence" value="ECO:0007669"/>
    <property type="project" value="UniProtKB-SubCell"/>
</dbReference>
<dbReference type="GO" id="GO:0008137">
    <property type="term" value="F:NADH dehydrogenase (ubiquinone) activity"/>
    <property type="evidence" value="ECO:0007669"/>
    <property type="project" value="InterPro"/>
</dbReference>
<dbReference type="GO" id="GO:0048038">
    <property type="term" value="F:quinone binding"/>
    <property type="evidence" value="ECO:0007669"/>
    <property type="project" value="UniProtKB-KW"/>
</dbReference>
<dbReference type="GO" id="GO:0042773">
    <property type="term" value="P:ATP synthesis coupled electron transport"/>
    <property type="evidence" value="ECO:0007669"/>
    <property type="project" value="InterPro"/>
</dbReference>
<dbReference type="GO" id="GO:0019684">
    <property type="term" value="P:photosynthesis, light reaction"/>
    <property type="evidence" value="ECO:0007669"/>
    <property type="project" value="UniProtKB-UniRule"/>
</dbReference>
<dbReference type="HAMAP" id="MF_00445">
    <property type="entry name" value="NDH1_NuoN_1"/>
    <property type="match status" value="1"/>
</dbReference>
<dbReference type="InterPro" id="IPR010096">
    <property type="entry name" value="NADH-Q_OxRdtase_suN/2"/>
</dbReference>
<dbReference type="InterPro" id="IPR001750">
    <property type="entry name" value="ND/Mrp_TM"/>
</dbReference>
<dbReference type="InterPro" id="IPR045693">
    <property type="entry name" value="Ndh2_N"/>
</dbReference>
<dbReference type="NCBIfam" id="TIGR01770">
    <property type="entry name" value="NDH_I_N"/>
    <property type="match status" value="1"/>
</dbReference>
<dbReference type="PANTHER" id="PTHR22773">
    <property type="entry name" value="NADH DEHYDROGENASE"/>
    <property type="match status" value="1"/>
</dbReference>
<dbReference type="Pfam" id="PF19530">
    <property type="entry name" value="Ndh2_N"/>
    <property type="match status" value="1"/>
</dbReference>
<dbReference type="Pfam" id="PF00361">
    <property type="entry name" value="Proton_antipo_M"/>
    <property type="match status" value="1"/>
</dbReference>
<dbReference type="PRINTS" id="PR01434">
    <property type="entry name" value="NADHDHGNASE5"/>
</dbReference>
<organism>
    <name type="scientific">Triticum aestivum</name>
    <name type="common">Wheat</name>
    <dbReference type="NCBI Taxonomy" id="4565"/>
    <lineage>
        <taxon>Eukaryota</taxon>
        <taxon>Viridiplantae</taxon>
        <taxon>Streptophyta</taxon>
        <taxon>Embryophyta</taxon>
        <taxon>Tracheophyta</taxon>
        <taxon>Spermatophyta</taxon>
        <taxon>Magnoliopsida</taxon>
        <taxon>Liliopsida</taxon>
        <taxon>Poales</taxon>
        <taxon>Poaceae</taxon>
        <taxon>BOP clade</taxon>
        <taxon>Pooideae</taxon>
        <taxon>Triticodae</taxon>
        <taxon>Triticeae</taxon>
        <taxon>Triticinae</taxon>
        <taxon>Triticum</taxon>
    </lineage>
</organism>
<keyword id="KW-0150">Chloroplast</keyword>
<keyword id="KW-0472">Membrane</keyword>
<keyword id="KW-0520">NAD</keyword>
<keyword id="KW-0521">NADP</keyword>
<keyword id="KW-0934">Plastid</keyword>
<keyword id="KW-0618">Plastoquinone</keyword>
<keyword id="KW-0874">Quinone</keyword>
<keyword id="KW-1185">Reference proteome</keyword>
<keyword id="KW-0793">Thylakoid</keyword>
<keyword id="KW-1278">Translocase</keyword>
<keyword id="KW-0812">Transmembrane</keyword>
<keyword id="KW-1133">Transmembrane helix</keyword>
<keyword id="KW-0813">Transport</keyword>
<geneLocation type="chloroplast"/>
<accession>P0CD54</accession>
<accession>P58282</accession>